<organism>
    <name type="scientific">Homo sapiens</name>
    <name type="common">Human</name>
    <dbReference type="NCBI Taxonomy" id="9606"/>
    <lineage>
        <taxon>Eukaryota</taxon>
        <taxon>Metazoa</taxon>
        <taxon>Chordata</taxon>
        <taxon>Craniata</taxon>
        <taxon>Vertebrata</taxon>
        <taxon>Euteleostomi</taxon>
        <taxon>Mammalia</taxon>
        <taxon>Eutheria</taxon>
        <taxon>Euarchontoglires</taxon>
        <taxon>Primates</taxon>
        <taxon>Haplorrhini</taxon>
        <taxon>Catarrhini</taxon>
        <taxon>Hominidae</taxon>
        <taxon>Homo</taxon>
    </lineage>
</organism>
<feature type="chain" id="PRO_0000050799" description="Calmodulin-regulated spectrin-associated protein 3">
    <location>
        <begin position="1"/>
        <end position="1249"/>
    </location>
</feature>
<feature type="domain" description="Calponin-homology (CH)" evidence="3">
    <location>
        <begin position="203"/>
        <end position="312"/>
    </location>
</feature>
<feature type="domain" description="CKK" evidence="4">
    <location>
        <begin position="1109"/>
        <end position="1243"/>
    </location>
</feature>
<feature type="region of interest" description="Disordered" evidence="5">
    <location>
        <begin position="183"/>
        <end position="205"/>
    </location>
</feature>
<feature type="region of interest" description="Disordered" evidence="5">
    <location>
        <begin position="328"/>
        <end position="385"/>
    </location>
</feature>
<feature type="region of interest" description="Disordered" evidence="5">
    <location>
        <begin position="430"/>
        <end position="457"/>
    </location>
</feature>
<feature type="region of interest" description="Disordered" evidence="5">
    <location>
        <begin position="473"/>
        <end position="609"/>
    </location>
</feature>
<feature type="region of interest" description="Disordered" evidence="5">
    <location>
        <begin position="632"/>
        <end position="696"/>
    </location>
</feature>
<feature type="region of interest" description="Disordered" evidence="5">
    <location>
        <begin position="714"/>
        <end position="1029"/>
    </location>
</feature>
<feature type="region of interest" description="Disordered" evidence="5">
    <location>
        <begin position="1061"/>
        <end position="1111"/>
    </location>
</feature>
<feature type="coiled-coil region" evidence="2">
    <location>
        <begin position="594"/>
        <end position="628"/>
    </location>
</feature>
<feature type="coiled-coil region" evidence="2">
    <location>
        <begin position="696"/>
        <end position="729"/>
    </location>
</feature>
<feature type="coiled-coil region" evidence="2">
    <location>
        <begin position="896"/>
        <end position="935"/>
    </location>
</feature>
<feature type="compositionally biased region" description="Low complexity" evidence="5">
    <location>
        <begin position="189"/>
        <end position="205"/>
    </location>
</feature>
<feature type="compositionally biased region" description="Low complexity" evidence="5">
    <location>
        <begin position="341"/>
        <end position="352"/>
    </location>
</feature>
<feature type="compositionally biased region" description="Polar residues" evidence="5">
    <location>
        <begin position="364"/>
        <end position="383"/>
    </location>
</feature>
<feature type="compositionally biased region" description="Pro residues" evidence="5">
    <location>
        <begin position="437"/>
        <end position="454"/>
    </location>
</feature>
<feature type="compositionally biased region" description="Basic and acidic residues" evidence="5">
    <location>
        <begin position="568"/>
        <end position="579"/>
    </location>
</feature>
<feature type="compositionally biased region" description="Low complexity" evidence="5">
    <location>
        <begin position="594"/>
        <end position="604"/>
    </location>
</feature>
<feature type="compositionally biased region" description="Acidic residues" evidence="5">
    <location>
        <begin position="647"/>
        <end position="657"/>
    </location>
</feature>
<feature type="compositionally biased region" description="Pro residues" evidence="5">
    <location>
        <begin position="731"/>
        <end position="741"/>
    </location>
</feature>
<feature type="compositionally biased region" description="Low complexity" evidence="5">
    <location>
        <begin position="754"/>
        <end position="779"/>
    </location>
</feature>
<feature type="compositionally biased region" description="Polar residues" evidence="5">
    <location>
        <begin position="814"/>
        <end position="825"/>
    </location>
</feature>
<feature type="compositionally biased region" description="Basic and acidic residues" evidence="5">
    <location>
        <begin position="889"/>
        <end position="940"/>
    </location>
</feature>
<feature type="compositionally biased region" description="Low complexity" evidence="5">
    <location>
        <begin position="950"/>
        <end position="964"/>
    </location>
</feature>
<feature type="compositionally biased region" description="Basic and acidic residues" evidence="5">
    <location>
        <begin position="970"/>
        <end position="998"/>
    </location>
</feature>
<feature type="modified residue" description="Phosphothreonine" evidence="21">
    <location>
        <position position="184"/>
    </location>
</feature>
<feature type="modified residue" description="Phosphoserine" evidence="21 25">
    <location>
        <position position="193"/>
    </location>
</feature>
<feature type="modified residue" description="Phosphoserine" evidence="22 23 24 25">
    <location>
        <position position="334"/>
    </location>
</feature>
<feature type="modified residue" description="Phosphoserine" evidence="21 24">
    <location>
        <position position="341"/>
    </location>
</feature>
<feature type="modified residue" description="Phosphoserine" evidence="21">
    <location>
        <position position="347"/>
    </location>
</feature>
<feature type="modified residue" description="Phosphoserine" evidence="24">
    <location>
        <position position="351"/>
    </location>
</feature>
<feature type="modified residue" description="Phosphoserine" evidence="21 24">
    <location>
        <position position="368"/>
    </location>
</feature>
<feature type="modified residue" description="Phosphoserine" evidence="24">
    <location>
        <position position="373"/>
    </location>
</feature>
<feature type="modified residue" description="Phosphoserine" evidence="24">
    <location>
        <position position="382"/>
    </location>
</feature>
<feature type="modified residue" description="Phosphoserine" evidence="25">
    <location>
        <position position="547"/>
    </location>
</feature>
<feature type="modified residue" description="Phosphoserine" evidence="20 21">
    <location>
        <position position="554"/>
    </location>
</feature>
<feature type="modified residue" description="Phosphoserine" evidence="21">
    <location>
        <position position="560"/>
    </location>
</feature>
<feature type="modified residue" description="Phosphoserine" evidence="21">
    <location>
        <position position="685"/>
    </location>
</feature>
<feature type="modified residue" description="Phosphoserine" evidence="24">
    <location>
        <position position="769"/>
    </location>
</feature>
<feature type="modified residue" description="Phosphothreonine" evidence="21 25">
    <location>
        <position position="799"/>
    </location>
</feature>
<feature type="modified residue" description="Phosphoserine" evidence="22 24">
    <location>
        <position position="814"/>
    </location>
</feature>
<feature type="modified residue" description="Phosphoserine" evidence="24">
    <location>
        <position position="1074"/>
    </location>
</feature>
<feature type="splice variant" id="VSP_041473" description="In isoform 2." evidence="15">
    <original>S</original>
    <variation>SCPTRWYWKLVPHAIAFCLKESGSKPPM</variation>
    <location>
        <position position="207"/>
    </location>
</feature>
<feature type="sequence variant" id="VAR_053991" description="In dbSNP:rs3745358.">
    <original>P</original>
    <variation>S</variation>
    <location>
        <position position="335"/>
    </location>
</feature>
<feature type="sequence conflict" description="In Ref. 3; BC035808." evidence="17" ref="3">
    <original>S</original>
    <variation>P</variation>
    <location>
        <position position="824"/>
    </location>
</feature>
<protein>
    <recommendedName>
        <fullName evidence="17">Calmodulin-regulated spectrin-associated protein 3</fullName>
    </recommendedName>
    <alternativeName>
        <fullName evidence="16">Protein Nezha</fullName>
    </alternativeName>
</protein>
<gene>
    <name evidence="19" type="primary">CAMSAP3</name>
    <name evidence="14" type="synonym">KIAA1543</name>
</gene>
<dbReference type="EMBL" id="AC008763">
    <property type="status" value="NOT_ANNOTATED_CDS"/>
    <property type="molecule type" value="Genomic_DNA"/>
</dbReference>
<dbReference type="EMBL" id="CH471139">
    <property type="protein sequence ID" value="EAW69025.1"/>
    <property type="molecule type" value="Genomic_DNA"/>
</dbReference>
<dbReference type="EMBL" id="BC020431">
    <property type="status" value="NOT_ANNOTATED_CDS"/>
    <property type="molecule type" value="mRNA"/>
</dbReference>
<dbReference type="EMBL" id="BC035808">
    <property type="status" value="NOT_ANNOTATED_CDS"/>
    <property type="molecule type" value="mRNA"/>
</dbReference>
<dbReference type="EMBL" id="AB040976">
    <property type="protein sequence ID" value="BAA96067.1"/>
    <property type="molecule type" value="mRNA"/>
</dbReference>
<dbReference type="EMBL" id="AL833927">
    <property type="protein sequence ID" value="CAD38783.1"/>
    <property type="molecule type" value="mRNA"/>
</dbReference>
<dbReference type="CCDS" id="CCDS42489.1">
    <molecule id="Q9P1Y5-1"/>
</dbReference>
<dbReference type="CCDS" id="CCDS45947.1">
    <molecule id="Q9P1Y5-2"/>
</dbReference>
<dbReference type="RefSeq" id="NP_001073898.1">
    <molecule id="Q9P1Y5-2"/>
    <property type="nucleotide sequence ID" value="NM_001080429.3"/>
</dbReference>
<dbReference type="RefSeq" id="NP_065953.1">
    <molecule id="Q9P1Y5-1"/>
    <property type="nucleotide sequence ID" value="NM_020902.2"/>
</dbReference>
<dbReference type="SMR" id="Q9P1Y5"/>
<dbReference type="BioGRID" id="121695">
    <property type="interactions" value="135"/>
</dbReference>
<dbReference type="CORUM" id="Q9P1Y5"/>
<dbReference type="DIP" id="DIP-52405N"/>
<dbReference type="ELM" id="Q9P1Y5"/>
<dbReference type="FunCoup" id="Q9P1Y5">
    <property type="interactions" value="854"/>
</dbReference>
<dbReference type="IntAct" id="Q9P1Y5">
    <property type="interactions" value="77"/>
</dbReference>
<dbReference type="MINT" id="Q9P1Y5"/>
<dbReference type="STRING" id="9606.ENSP00000416797"/>
<dbReference type="CarbonylDB" id="Q9P1Y5"/>
<dbReference type="GlyCosmos" id="Q9P1Y5">
    <property type="glycosylation" value="1 site, 1 glycan"/>
</dbReference>
<dbReference type="GlyGen" id="Q9P1Y5">
    <property type="glycosylation" value="9 sites, 1 O-linked glycan (5 sites)"/>
</dbReference>
<dbReference type="iPTMnet" id="Q9P1Y5"/>
<dbReference type="PhosphoSitePlus" id="Q9P1Y5"/>
<dbReference type="BioMuta" id="CAMSAP3"/>
<dbReference type="DMDM" id="61213747"/>
<dbReference type="jPOST" id="Q9P1Y5"/>
<dbReference type="MassIVE" id="Q9P1Y5"/>
<dbReference type="PaxDb" id="9606-ENSP00000416797"/>
<dbReference type="PeptideAtlas" id="Q9P1Y5"/>
<dbReference type="ProteomicsDB" id="83677">
    <molecule id="Q9P1Y5-1"/>
</dbReference>
<dbReference type="ProteomicsDB" id="83678">
    <molecule id="Q9P1Y5-2"/>
</dbReference>
<dbReference type="Pumba" id="Q9P1Y5"/>
<dbReference type="ABCD" id="Q9P1Y5">
    <property type="antibodies" value="8 sequenced antibodies"/>
</dbReference>
<dbReference type="Antibodypedia" id="50549">
    <property type="antibodies" value="76 antibodies from 18 providers"/>
</dbReference>
<dbReference type="DNASU" id="57662"/>
<dbReference type="Ensembl" id="ENST00000160298.9">
    <molecule id="Q9P1Y5-1"/>
    <property type="protein sequence ID" value="ENSP00000160298.3"/>
    <property type="gene ID" value="ENSG00000076826.10"/>
</dbReference>
<dbReference type="Ensembl" id="ENST00000446248.4">
    <molecule id="Q9P1Y5-2"/>
    <property type="protein sequence ID" value="ENSP00000416797.1"/>
    <property type="gene ID" value="ENSG00000076826.10"/>
</dbReference>
<dbReference type="GeneID" id="57662"/>
<dbReference type="KEGG" id="hsa:57662"/>
<dbReference type="MANE-Select" id="ENST00000160298.9">
    <property type="protein sequence ID" value="ENSP00000160298.3"/>
    <property type="RefSeq nucleotide sequence ID" value="NM_020902.2"/>
    <property type="RefSeq protein sequence ID" value="NP_065953.1"/>
</dbReference>
<dbReference type="UCSC" id="uc002mgu.5">
    <molecule id="Q9P1Y5-1"/>
    <property type="organism name" value="human"/>
</dbReference>
<dbReference type="AGR" id="HGNC:29307"/>
<dbReference type="CTD" id="57662"/>
<dbReference type="DisGeNET" id="57662"/>
<dbReference type="GeneCards" id="CAMSAP3"/>
<dbReference type="HGNC" id="HGNC:29307">
    <property type="gene designation" value="CAMSAP3"/>
</dbReference>
<dbReference type="HPA" id="ENSG00000076826">
    <property type="expression patterns" value="Tissue enhanced (skin)"/>
</dbReference>
<dbReference type="MIM" id="612685">
    <property type="type" value="gene"/>
</dbReference>
<dbReference type="neXtProt" id="NX_Q9P1Y5"/>
<dbReference type="OpenTargets" id="ENSG00000076826"/>
<dbReference type="PharmGKB" id="PA134885087"/>
<dbReference type="VEuPathDB" id="HostDB:ENSG00000076826"/>
<dbReference type="eggNOG" id="KOG3654">
    <property type="taxonomic scope" value="Eukaryota"/>
</dbReference>
<dbReference type="GeneTree" id="ENSGT00950000182975"/>
<dbReference type="HOGENOM" id="CLU_004833_1_0_1"/>
<dbReference type="InParanoid" id="Q9P1Y5"/>
<dbReference type="OMA" id="HQPILMX"/>
<dbReference type="OrthoDB" id="2125658at2759"/>
<dbReference type="PAN-GO" id="Q9P1Y5">
    <property type="GO annotations" value="4 GO annotations based on evolutionary models"/>
</dbReference>
<dbReference type="PhylomeDB" id="Q9P1Y5"/>
<dbReference type="TreeFam" id="TF315529"/>
<dbReference type="PathwayCommons" id="Q9P1Y5"/>
<dbReference type="SignaLink" id="Q9P1Y5"/>
<dbReference type="BioGRID-ORCS" id="57662">
    <property type="hits" value="28 hits in 1147 CRISPR screens"/>
</dbReference>
<dbReference type="CD-CODE" id="FB4E32DD">
    <property type="entry name" value="Presynaptic clusters and postsynaptic densities"/>
</dbReference>
<dbReference type="ChiTaRS" id="CAMSAP3">
    <property type="organism name" value="human"/>
</dbReference>
<dbReference type="GenomeRNAi" id="57662"/>
<dbReference type="Pharos" id="Q9P1Y5">
    <property type="development level" value="Tbio"/>
</dbReference>
<dbReference type="PRO" id="PR:Q9P1Y5"/>
<dbReference type="Proteomes" id="UP000005640">
    <property type="component" value="Chromosome 19"/>
</dbReference>
<dbReference type="RNAct" id="Q9P1Y5">
    <property type="molecule type" value="protein"/>
</dbReference>
<dbReference type="Bgee" id="ENSG00000076826">
    <property type="expression patterns" value="Expressed in lower esophagus mucosa and 96 other cell types or tissues"/>
</dbReference>
<dbReference type="GO" id="GO:0005930">
    <property type="term" value="C:axoneme"/>
    <property type="evidence" value="ECO:0000250"/>
    <property type="project" value="UniProtKB"/>
</dbReference>
<dbReference type="GO" id="GO:0036064">
    <property type="term" value="C:ciliary basal body"/>
    <property type="evidence" value="ECO:0000250"/>
    <property type="project" value="UniProtKB"/>
</dbReference>
<dbReference type="GO" id="GO:0005737">
    <property type="term" value="C:cytoplasm"/>
    <property type="evidence" value="ECO:0000314"/>
    <property type="project" value="UniProtKB"/>
</dbReference>
<dbReference type="GO" id="GO:0036449">
    <property type="term" value="C:microtubule minus-end"/>
    <property type="evidence" value="ECO:0007669"/>
    <property type="project" value="Ensembl"/>
</dbReference>
<dbReference type="GO" id="GO:0031514">
    <property type="term" value="C:motile cilium"/>
    <property type="evidence" value="ECO:0000250"/>
    <property type="project" value="UniProtKB"/>
</dbReference>
<dbReference type="GO" id="GO:0031298">
    <property type="term" value="C:replication fork protection complex"/>
    <property type="evidence" value="ECO:0000318"/>
    <property type="project" value="GO_Central"/>
</dbReference>
<dbReference type="GO" id="GO:0005915">
    <property type="term" value="C:zonula adherens"/>
    <property type="evidence" value="ECO:0000314"/>
    <property type="project" value="UniProtKB"/>
</dbReference>
<dbReference type="GO" id="GO:0051015">
    <property type="term" value="F:actin filament binding"/>
    <property type="evidence" value="ECO:0000314"/>
    <property type="project" value="UniProtKB"/>
</dbReference>
<dbReference type="GO" id="GO:0005516">
    <property type="term" value="F:calmodulin binding"/>
    <property type="evidence" value="ECO:0007669"/>
    <property type="project" value="InterPro"/>
</dbReference>
<dbReference type="GO" id="GO:0003677">
    <property type="term" value="F:DNA binding"/>
    <property type="evidence" value="ECO:0000318"/>
    <property type="project" value="GO_Central"/>
</dbReference>
<dbReference type="GO" id="GO:0051011">
    <property type="term" value="F:microtubule minus-end binding"/>
    <property type="evidence" value="ECO:0000314"/>
    <property type="project" value="UniProtKB"/>
</dbReference>
<dbReference type="GO" id="GO:0030507">
    <property type="term" value="F:spectrin binding"/>
    <property type="evidence" value="ECO:0007669"/>
    <property type="project" value="InterPro"/>
</dbReference>
<dbReference type="GO" id="GO:0003341">
    <property type="term" value="P:cilium movement"/>
    <property type="evidence" value="ECO:0000250"/>
    <property type="project" value="UniProtKB"/>
</dbReference>
<dbReference type="GO" id="GO:0000076">
    <property type="term" value="P:DNA replication checkpoint signaling"/>
    <property type="evidence" value="ECO:0000318"/>
    <property type="project" value="GO_Central"/>
</dbReference>
<dbReference type="GO" id="GO:0009792">
    <property type="term" value="P:embryo development ending in birth or egg hatching"/>
    <property type="evidence" value="ECO:0000250"/>
    <property type="project" value="UniProtKB"/>
</dbReference>
<dbReference type="GO" id="GO:0090136">
    <property type="term" value="P:epithelial cell-cell adhesion"/>
    <property type="evidence" value="ECO:0000315"/>
    <property type="project" value="UniProtKB"/>
</dbReference>
<dbReference type="GO" id="GO:0045198">
    <property type="term" value="P:establishment of epithelial cell apical/basal polarity"/>
    <property type="evidence" value="ECO:0000314"/>
    <property type="project" value="UniProtKB"/>
</dbReference>
<dbReference type="GO" id="GO:0030951">
    <property type="term" value="P:establishment or maintenance of microtubule cytoskeleton polarity"/>
    <property type="evidence" value="ECO:0000314"/>
    <property type="project" value="UniProtKB"/>
</dbReference>
<dbReference type="GO" id="GO:0001701">
    <property type="term" value="P:in utero embryonic development"/>
    <property type="evidence" value="ECO:0007669"/>
    <property type="project" value="Ensembl"/>
</dbReference>
<dbReference type="GO" id="GO:0034453">
    <property type="term" value="P:microtubule anchoring"/>
    <property type="evidence" value="ECO:0000315"/>
    <property type="project" value="UniProtKB"/>
</dbReference>
<dbReference type="GO" id="GO:0000226">
    <property type="term" value="P:microtubule cytoskeleton organization"/>
    <property type="evidence" value="ECO:0000314"/>
    <property type="project" value="UniProtKB"/>
</dbReference>
<dbReference type="GO" id="GO:0031175">
    <property type="term" value="P:neuron projection development"/>
    <property type="evidence" value="ECO:0007669"/>
    <property type="project" value="InterPro"/>
</dbReference>
<dbReference type="GO" id="GO:0098840">
    <property type="term" value="P:protein transport along microtubule"/>
    <property type="evidence" value="ECO:0000250"/>
    <property type="project" value="UniProtKB"/>
</dbReference>
<dbReference type="GO" id="GO:0030334">
    <property type="term" value="P:regulation of cell migration"/>
    <property type="evidence" value="ECO:0000314"/>
    <property type="project" value="UniProtKB"/>
</dbReference>
<dbReference type="GO" id="GO:0051893">
    <property type="term" value="P:regulation of focal adhesion assembly"/>
    <property type="evidence" value="ECO:0000314"/>
    <property type="project" value="UniProtKB"/>
</dbReference>
<dbReference type="GO" id="GO:1903358">
    <property type="term" value="P:regulation of Golgi organization"/>
    <property type="evidence" value="ECO:0000314"/>
    <property type="project" value="UniProtKB"/>
</dbReference>
<dbReference type="GO" id="GO:0070507">
    <property type="term" value="P:regulation of microtubule cytoskeleton organization"/>
    <property type="evidence" value="ECO:0000315"/>
    <property type="project" value="UniProtKB"/>
</dbReference>
<dbReference type="GO" id="GO:0031113">
    <property type="term" value="P:regulation of microtubule polymerization"/>
    <property type="evidence" value="ECO:0000314"/>
    <property type="project" value="UniProtKB"/>
</dbReference>
<dbReference type="GO" id="GO:0033043">
    <property type="term" value="P:regulation of organelle organization"/>
    <property type="evidence" value="ECO:0000315"/>
    <property type="project" value="UniProtKB"/>
</dbReference>
<dbReference type="GO" id="GO:0043111">
    <property type="term" value="P:replication fork arrest"/>
    <property type="evidence" value="ECO:0000318"/>
    <property type="project" value="GO_Central"/>
</dbReference>
<dbReference type="GO" id="GO:0045218">
    <property type="term" value="P:zonula adherens maintenance"/>
    <property type="evidence" value="ECO:0000315"/>
    <property type="project" value="UniProtKB"/>
</dbReference>
<dbReference type="FunFam" id="3.10.20.360:FF:000001">
    <property type="entry name" value="Calmodulin-regulated spectrin-associated protein 3 isoform 2"/>
    <property type="match status" value="1"/>
</dbReference>
<dbReference type="Gene3D" id="3.10.20.360">
    <property type="entry name" value="CKK domain"/>
    <property type="match status" value="1"/>
</dbReference>
<dbReference type="InterPro" id="IPR032940">
    <property type="entry name" value="CAMSAP"/>
</dbReference>
<dbReference type="InterPro" id="IPR022613">
    <property type="entry name" value="CAMSAP-like_CH_dom"/>
</dbReference>
<dbReference type="InterPro" id="IPR031372">
    <property type="entry name" value="CAMSAP_CC1"/>
</dbReference>
<dbReference type="InterPro" id="IPR001715">
    <property type="entry name" value="CH_dom"/>
</dbReference>
<dbReference type="InterPro" id="IPR036872">
    <property type="entry name" value="CH_dom_sf"/>
</dbReference>
<dbReference type="InterPro" id="IPR038209">
    <property type="entry name" value="CKK_dom_sf"/>
</dbReference>
<dbReference type="InterPro" id="IPR014797">
    <property type="entry name" value="CKK_domain"/>
</dbReference>
<dbReference type="InterPro" id="IPR011033">
    <property type="entry name" value="PRC_barrel-like_sf"/>
</dbReference>
<dbReference type="PANTHER" id="PTHR21595:SF2">
    <property type="entry name" value="CALMODULIN-REGULATED SPECTRIN-ASSOCIATED PROTEIN 3"/>
    <property type="match status" value="1"/>
</dbReference>
<dbReference type="PANTHER" id="PTHR21595">
    <property type="entry name" value="PATRONIN"/>
    <property type="match status" value="1"/>
</dbReference>
<dbReference type="Pfam" id="PF17095">
    <property type="entry name" value="CAMSAP_CC1"/>
    <property type="match status" value="1"/>
</dbReference>
<dbReference type="Pfam" id="PF11971">
    <property type="entry name" value="CAMSAP_CH"/>
    <property type="match status" value="1"/>
</dbReference>
<dbReference type="Pfam" id="PF08683">
    <property type="entry name" value="CAMSAP_CKK"/>
    <property type="match status" value="1"/>
</dbReference>
<dbReference type="SMART" id="SM01051">
    <property type="entry name" value="CAMSAP_CKK"/>
    <property type="match status" value="1"/>
</dbReference>
<dbReference type="SUPFAM" id="SSF47576">
    <property type="entry name" value="Calponin-homology domain, CH-domain"/>
    <property type="match status" value="1"/>
</dbReference>
<dbReference type="SUPFAM" id="SSF50346">
    <property type="entry name" value="PRC-barrel domain"/>
    <property type="match status" value="1"/>
</dbReference>
<dbReference type="PROSITE" id="PS50021">
    <property type="entry name" value="CH"/>
    <property type="match status" value="1"/>
</dbReference>
<dbReference type="PROSITE" id="PS51508">
    <property type="entry name" value="CKK"/>
    <property type="match status" value="1"/>
</dbReference>
<evidence type="ECO:0000250" key="1">
    <source>
        <dbReference type="UniProtKB" id="Q80VC9"/>
    </source>
</evidence>
<evidence type="ECO:0000255" key="2"/>
<evidence type="ECO:0000255" key="3">
    <source>
        <dbReference type="PROSITE-ProRule" id="PRU00044"/>
    </source>
</evidence>
<evidence type="ECO:0000255" key="4">
    <source>
        <dbReference type="PROSITE-ProRule" id="PRU00841"/>
    </source>
</evidence>
<evidence type="ECO:0000256" key="5">
    <source>
        <dbReference type="SAM" id="MobiDB-lite"/>
    </source>
</evidence>
<evidence type="ECO:0000269" key="6">
    <source>
    </source>
</evidence>
<evidence type="ECO:0000269" key="7">
    <source>
    </source>
</evidence>
<evidence type="ECO:0000269" key="8">
    <source>
    </source>
</evidence>
<evidence type="ECO:0000269" key="9">
    <source>
    </source>
</evidence>
<evidence type="ECO:0000269" key="10">
    <source>
    </source>
</evidence>
<evidence type="ECO:0000269" key="11">
    <source>
    </source>
</evidence>
<evidence type="ECO:0000269" key="12">
    <source>
    </source>
</evidence>
<evidence type="ECO:0000269" key="13">
    <source>
    </source>
</evidence>
<evidence type="ECO:0000303" key="14">
    <source>
    </source>
</evidence>
<evidence type="ECO:0000303" key="15">
    <source>
    </source>
</evidence>
<evidence type="ECO:0000303" key="16">
    <source>
    </source>
</evidence>
<evidence type="ECO:0000305" key="17"/>
<evidence type="ECO:0000305" key="18">
    <source>
    </source>
</evidence>
<evidence type="ECO:0000312" key="19">
    <source>
        <dbReference type="HGNC" id="HGNC:29307"/>
    </source>
</evidence>
<evidence type="ECO:0007744" key="20">
    <source>
    </source>
</evidence>
<evidence type="ECO:0007744" key="21">
    <source>
    </source>
</evidence>
<evidence type="ECO:0007744" key="22">
    <source>
    </source>
</evidence>
<evidence type="ECO:0007744" key="23">
    <source>
    </source>
</evidence>
<evidence type="ECO:0007744" key="24">
    <source>
    </source>
</evidence>
<evidence type="ECO:0007744" key="25">
    <source>
    </source>
</evidence>
<accession>Q9P1Y5</accession>
<accession>Q8NDF1</accession>
<comment type="function">
    <text evidence="1 6 7 8 9 10 11 12 13">Key microtubule-organizing protein that specifically binds the minus-end of non-centrosomal microtubules and regulates their dynamics and organization (PubMed:19041755, PubMed:23169647). Specifically recognizes growing microtubule minus-ends and autonomously decorates and stabilizes microtubule lattice formed by microtubule minus-end polymerization (PubMed:24486153). Acts on free microtubule minus-ends that are not capped by microtubule-nucleating proteins or other factors and protects microtubule minus-ends from depolymerization (PubMed:24486153). In addition, it also reduces the velocity of microtubule polymerization (PubMed:24486153). Required for the biogenesis and the maintenance of zonula adherens by anchoring the minus-end of microtubules to zonula adherens and by recruiting the kinesin KIFC3 to those junctional sites (PubMed:19041755). Required for orienting the apical-to-basal polarity of microtubules in epithelial cells: acts by tethering non-centrosomal microtubules to the apical cortex, leading to their longitudinal orientation (PubMed:26715742, PubMed:27802168). Plays a key role in early embryos, which lack centrosomes: accumulates at the microtubule bridges that connect pairs of cells and enables the formation of a non-centrosomal microtubule-organizing center that directs intracellular transport in the early embryo (By similarity). Couples non-centrosomal microtubules with actin: interaction with MACF1 at the minus ends of non-centrosomal microtubules, tethers the microtubules to actin filaments, regulating focal adhesion size and cell migration (PubMed:27693509). Plays a key role in the generation of non-centrosomal microtubules by accumulating in the pericentrosomal region and cooperating with KATNA1 to release non-centrosomal microtubules from the centrosome (PubMed:28386021). Through the microtubule cytoskeleton, also regulates the organization of cellular organelles including the Golgi and the early endosomes (PubMed:28089391). Through interaction with AKAP9, involved in translocation of Golgi vesicles in epithelial cells, where microtubules are mainly non-centrosomal (PubMed:28089391). Plays an important role in motile cilia function by facilitatating proper orientation of basal bodies and formation of central microtubule pairs in motile cilia (By similarity).</text>
</comment>
<comment type="subunit">
    <text evidence="1 6 8 10 11 12 13">Interacts with PLEKHA7 (PubMed:19041755). Interacts with CAMSAP2 (By similarity). Interacts with KATNA1 and KATNB1; leading to regulate the length of CAMSAP3-decorated microtubule stretches (PubMed:24486153, PubMed:28386021). Interacts with AKAP9; regulating Golgi assembly in epithelial cells (PubMed:28089391). Interacts with MACF1 (PubMed:27693509, PubMed:27802168). Interacts with AKNA (By similarity).</text>
</comment>
<comment type="interaction">
    <interactant intactId="EBI-18121830">
        <id>Q9P1Y5-2</id>
    </interactant>
    <interactant intactId="EBI-1237044">
        <id>O43143</id>
        <label>DHX15</label>
    </interactant>
    <organismsDiffer>false</organismsDiffer>
    <experiments>3</experiments>
</comment>
<comment type="interaction">
    <interactant intactId="EBI-18121830">
        <id>Q9P1Y5-2</id>
    </interactant>
    <interactant intactId="EBI-5661036">
        <id>A1L4K1</id>
        <label>FSD2</label>
    </interactant>
    <organismsDiffer>false</organismsDiffer>
    <experiments>3</experiments>
</comment>
<comment type="interaction">
    <interactant intactId="EBI-18121830">
        <id>Q9P1Y5-2</id>
    </interactant>
    <interactant intactId="EBI-7116203">
        <id>O75031</id>
        <label>HSF2BP</label>
    </interactant>
    <organismsDiffer>false</organismsDiffer>
    <experiments>3</experiments>
</comment>
<comment type="subcellular location">
    <subcellularLocation>
        <location evidence="6 7 8 10 13">Cytoplasm</location>
        <location evidence="6 7 8 10 13">Cytoskeleton</location>
    </subcellularLocation>
    <subcellularLocation>
        <location evidence="6">Cell junction</location>
        <location evidence="6">Adherens junction</location>
    </subcellularLocation>
    <subcellularLocation>
        <location evidence="6">Cytoplasm</location>
    </subcellularLocation>
    <subcellularLocation>
        <location evidence="1">Cytoplasm</location>
        <location evidence="1">Cytoskeleton</location>
        <location evidence="1">Cilium axoneme</location>
    </subcellularLocation>
    <subcellularLocation>
        <location evidence="1">Cytoplasm</location>
        <location evidence="1">Cytoskeleton</location>
        <location evidence="1">Cilium basal body</location>
    </subcellularLocation>
    <text evidence="1 6 8 10 13">Scattered in the cytoplasm, associated with the minus-end of microtubules and also detected at the centrosomes (PubMed:19041755, PubMed:24486153, PubMed:27693509). Decorates the minus-end of microtubules by decreasing the rate of tubulin incorporation and remaining bound (PubMed:24486153). Localizes along zonula adherens only at mature cell-cell contacts (PubMed:19041755). In early embryos, accumulates at the microtubule bridges that connect pairs of cells: this structure is present in early embryos, which lack centrosomes (By similarity). This cytokinetic bridge does not undergo stereotypical abscission after cell division (By similarity). Accumulates to the pericentrosomal region following interaction with KATNA1 (PubMed:28386021).</text>
</comment>
<comment type="alternative products">
    <event type="alternative splicing"/>
    <isoform>
        <id>Q9P1Y5-1</id>
        <name>1</name>
        <sequence type="displayed"/>
    </isoform>
    <isoform>
        <id>Q9P1Y5-2</id>
        <name>2</name>
        <sequence type="described" ref="VSP_041473"/>
    </isoform>
</comment>
<comment type="domain">
    <text evidence="4 8">The CKK domain binds microtubules and specifically recognizes the minus-end of microtubules.</text>
</comment>
<comment type="miscellaneous">
    <text evidence="18">'Nezha' is a deity in Chinese mythology.</text>
</comment>
<comment type="similarity">
    <text evidence="4">Belongs to the CAMSAP1 family.</text>
</comment>
<keyword id="KW-0025">Alternative splicing</keyword>
<keyword id="KW-0965">Cell junction</keyword>
<keyword id="KW-0966">Cell projection</keyword>
<keyword id="KW-0970">Cilium biogenesis/degradation</keyword>
<keyword id="KW-0175">Coiled coil</keyword>
<keyword id="KW-0963">Cytoplasm</keyword>
<keyword id="KW-0206">Cytoskeleton</keyword>
<keyword id="KW-0493">Microtubule</keyword>
<keyword id="KW-0597">Phosphoprotein</keyword>
<keyword id="KW-1267">Proteomics identification</keyword>
<keyword id="KW-1185">Reference proteome</keyword>
<name>CAMP3_HUMAN</name>
<proteinExistence type="evidence at protein level"/>
<reference key="1">
    <citation type="journal article" date="2004" name="Nature">
        <title>The DNA sequence and biology of human chromosome 19.</title>
        <authorList>
            <person name="Grimwood J."/>
            <person name="Gordon L.A."/>
            <person name="Olsen A.S."/>
            <person name="Terry A."/>
            <person name="Schmutz J."/>
            <person name="Lamerdin J.E."/>
            <person name="Hellsten U."/>
            <person name="Goodstein D."/>
            <person name="Couronne O."/>
            <person name="Tran-Gyamfi M."/>
            <person name="Aerts A."/>
            <person name="Altherr M."/>
            <person name="Ashworth L."/>
            <person name="Bajorek E."/>
            <person name="Black S."/>
            <person name="Branscomb E."/>
            <person name="Caenepeel S."/>
            <person name="Carrano A.V."/>
            <person name="Caoile C."/>
            <person name="Chan Y.M."/>
            <person name="Christensen M."/>
            <person name="Cleland C.A."/>
            <person name="Copeland A."/>
            <person name="Dalin E."/>
            <person name="Dehal P."/>
            <person name="Denys M."/>
            <person name="Detter J.C."/>
            <person name="Escobar J."/>
            <person name="Flowers D."/>
            <person name="Fotopulos D."/>
            <person name="Garcia C."/>
            <person name="Georgescu A.M."/>
            <person name="Glavina T."/>
            <person name="Gomez M."/>
            <person name="Gonzales E."/>
            <person name="Groza M."/>
            <person name="Hammon N."/>
            <person name="Hawkins T."/>
            <person name="Haydu L."/>
            <person name="Ho I."/>
            <person name="Huang W."/>
            <person name="Israni S."/>
            <person name="Jett J."/>
            <person name="Kadner K."/>
            <person name="Kimball H."/>
            <person name="Kobayashi A."/>
            <person name="Larionov V."/>
            <person name="Leem S.-H."/>
            <person name="Lopez F."/>
            <person name="Lou Y."/>
            <person name="Lowry S."/>
            <person name="Malfatti S."/>
            <person name="Martinez D."/>
            <person name="McCready P.M."/>
            <person name="Medina C."/>
            <person name="Morgan J."/>
            <person name="Nelson K."/>
            <person name="Nolan M."/>
            <person name="Ovcharenko I."/>
            <person name="Pitluck S."/>
            <person name="Pollard M."/>
            <person name="Popkie A.P."/>
            <person name="Predki P."/>
            <person name="Quan G."/>
            <person name="Ramirez L."/>
            <person name="Rash S."/>
            <person name="Retterer J."/>
            <person name="Rodriguez A."/>
            <person name="Rogers S."/>
            <person name="Salamov A."/>
            <person name="Salazar A."/>
            <person name="She X."/>
            <person name="Smith D."/>
            <person name="Slezak T."/>
            <person name="Solovyev V."/>
            <person name="Thayer N."/>
            <person name="Tice H."/>
            <person name="Tsai M."/>
            <person name="Ustaszewska A."/>
            <person name="Vo N."/>
            <person name="Wagner M."/>
            <person name="Wheeler J."/>
            <person name="Wu K."/>
            <person name="Xie G."/>
            <person name="Yang J."/>
            <person name="Dubchak I."/>
            <person name="Furey T.S."/>
            <person name="DeJong P."/>
            <person name="Dickson M."/>
            <person name="Gordon D."/>
            <person name="Eichler E.E."/>
            <person name="Pennacchio L.A."/>
            <person name="Richardson P."/>
            <person name="Stubbs L."/>
            <person name="Rokhsar D.S."/>
            <person name="Myers R.M."/>
            <person name="Rubin E.M."/>
            <person name="Lucas S.M."/>
        </authorList>
    </citation>
    <scope>NUCLEOTIDE SEQUENCE [LARGE SCALE GENOMIC DNA]</scope>
</reference>
<reference key="2">
    <citation type="submission" date="2005-07" db="EMBL/GenBank/DDBJ databases">
        <authorList>
            <person name="Mural R.J."/>
            <person name="Istrail S."/>
            <person name="Sutton G.G."/>
            <person name="Florea L."/>
            <person name="Halpern A.L."/>
            <person name="Mobarry C.M."/>
            <person name="Lippert R."/>
            <person name="Walenz B."/>
            <person name="Shatkay H."/>
            <person name="Dew I."/>
            <person name="Miller J.R."/>
            <person name="Flanigan M.J."/>
            <person name="Edwards N.J."/>
            <person name="Bolanos R."/>
            <person name="Fasulo D."/>
            <person name="Halldorsson B.V."/>
            <person name="Hannenhalli S."/>
            <person name="Turner R."/>
            <person name="Yooseph S."/>
            <person name="Lu F."/>
            <person name="Nusskern D.R."/>
            <person name="Shue B.C."/>
            <person name="Zheng X.H."/>
            <person name="Zhong F."/>
            <person name="Delcher A.L."/>
            <person name="Huson D.H."/>
            <person name="Kravitz S.A."/>
            <person name="Mouchard L."/>
            <person name="Reinert K."/>
            <person name="Remington K.A."/>
            <person name="Clark A.G."/>
            <person name="Waterman M.S."/>
            <person name="Eichler E.E."/>
            <person name="Adams M.D."/>
            <person name="Hunkapiller M.W."/>
            <person name="Myers E.W."/>
            <person name="Venter J.C."/>
        </authorList>
    </citation>
    <scope>NUCLEOTIDE SEQUENCE [LARGE SCALE GENOMIC DNA]</scope>
</reference>
<reference key="3">
    <citation type="journal article" date="2004" name="Genome Res.">
        <title>The status, quality, and expansion of the NIH full-length cDNA project: the Mammalian Gene Collection (MGC).</title>
        <authorList>
            <consortium name="The MGC Project Team"/>
        </authorList>
    </citation>
    <scope>NUCLEOTIDE SEQUENCE [LARGE SCALE MRNA] (ISOFORMS 1 AND 2)</scope>
    <source>
        <tissue>Brain</tissue>
        <tissue>Retinoblastoma</tissue>
    </source>
</reference>
<reference key="4">
    <citation type="journal article" date="2000" name="DNA Res.">
        <title>Prediction of the coding sequences of unidentified human genes. XVII. The complete sequences of 100 new cDNA clones from brain which code for large proteins in vitro.</title>
        <authorList>
            <person name="Nagase T."/>
            <person name="Kikuno R."/>
            <person name="Ishikawa K."/>
            <person name="Hirosawa M."/>
            <person name="Ohara O."/>
        </authorList>
    </citation>
    <scope>NUCLEOTIDE SEQUENCE [LARGE SCALE MRNA] OF 333-1249 (ISOFORMS 1/2)</scope>
    <source>
        <tissue>Brain</tissue>
    </source>
</reference>
<reference key="5">
    <citation type="journal article" date="2007" name="BMC Genomics">
        <title>The full-ORF clone resource of the German cDNA consortium.</title>
        <authorList>
            <person name="Bechtel S."/>
            <person name="Rosenfelder H."/>
            <person name="Duda A."/>
            <person name="Schmidt C.P."/>
            <person name="Ernst U."/>
            <person name="Wellenreuther R."/>
            <person name="Mehrle A."/>
            <person name="Schuster C."/>
            <person name="Bahr A."/>
            <person name="Bloecker H."/>
            <person name="Heubner D."/>
            <person name="Hoerlein A."/>
            <person name="Michel G."/>
            <person name="Wedler H."/>
            <person name="Koehrer K."/>
            <person name="Ottenwaelder B."/>
            <person name="Poustka A."/>
            <person name="Wiemann S."/>
            <person name="Schupp I."/>
        </authorList>
    </citation>
    <scope>NUCLEOTIDE SEQUENCE [LARGE SCALE MRNA] OF 407-1249 (ISOFORM 1/2)</scope>
    <source>
        <tissue>Testis</tissue>
    </source>
</reference>
<reference key="6">
    <citation type="journal article" date="2006" name="Nat. Biotechnol.">
        <title>A probability-based approach for high-throughput protein phosphorylation analysis and site localization.</title>
        <authorList>
            <person name="Beausoleil S.A."/>
            <person name="Villen J."/>
            <person name="Gerber S.A."/>
            <person name="Rush J."/>
            <person name="Gygi S.P."/>
        </authorList>
    </citation>
    <scope>PHOSPHORYLATION [LARGE SCALE ANALYSIS] AT SER-554</scope>
    <scope>IDENTIFICATION BY MASS SPECTROMETRY [LARGE SCALE ANALYSIS]</scope>
    <source>
        <tissue>Cervix carcinoma</tissue>
    </source>
</reference>
<reference key="7">
    <citation type="journal article" date="2008" name="Cell">
        <title>Anchorage of microtubule minus ends to adherens junctions regulates epithelial cell-cell contacts.</title>
        <authorList>
            <person name="Meng W."/>
            <person name="Mushika Y."/>
            <person name="Ichii T."/>
            <person name="Takeichi M."/>
        </authorList>
    </citation>
    <scope>FUNCTION</scope>
    <scope>SUBCELLULAR LOCATION</scope>
    <scope>MICROTUBULE-BINDING</scope>
    <scope>INTERACTION WITH PLEKHA7</scope>
</reference>
<reference key="8">
    <citation type="journal article" date="2008" name="Proc. Natl. Acad. Sci. U.S.A.">
        <title>A quantitative atlas of mitotic phosphorylation.</title>
        <authorList>
            <person name="Dephoure N."/>
            <person name="Zhou C."/>
            <person name="Villen J."/>
            <person name="Beausoleil S.A."/>
            <person name="Bakalarski C.E."/>
            <person name="Elledge S.J."/>
            <person name="Gygi S.P."/>
        </authorList>
    </citation>
    <scope>PHOSPHORYLATION [LARGE SCALE ANALYSIS] AT THR-184; SER-193; SER-341; SER-347; SER-368; SER-554; SER-560; SER-685 AND THR-799</scope>
    <scope>IDENTIFICATION BY MASS SPECTROMETRY [LARGE SCALE ANALYSIS]</scope>
    <source>
        <tissue>Cervix carcinoma</tissue>
    </source>
</reference>
<reference key="9">
    <citation type="journal article" date="2009" name="Anal. Chem.">
        <title>Lys-N and trypsin cover complementary parts of the phosphoproteome in a refined SCX-based approach.</title>
        <authorList>
            <person name="Gauci S."/>
            <person name="Helbig A.O."/>
            <person name="Slijper M."/>
            <person name="Krijgsveld J."/>
            <person name="Heck A.J."/>
            <person name="Mohammed S."/>
        </authorList>
    </citation>
    <scope>IDENTIFICATION BY MASS SPECTROMETRY [LARGE SCALE ANALYSIS]</scope>
</reference>
<reference key="10">
    <citation type="journal article" date="2010" name="Sci. Signal.">
        <title>Quantitative phosphoproteomics reveals widespread full phosphorylation site occupancy during mitosis.</title>
        <authorList>
            <person name="Olsen J.V."/>
            <person name="Vermeulen M."/>
            <person name="Santamaria A."/>
            <person name="Kumar C."/>
            <person name="Miller M.L."/>
            <person name="Jensen L.J."/>
            <person name="Gnad F."/>
            <person name="Cox J."/>
            <person name="Jensen T.S."/>
            <person name="Nigg E.A."/>
            <person name="Brunak S."/>
            <person name="Mann M."/>
        </authorList>
    </citation>
    <scope>PHOSPHORYLATION [LARGE SCALE ANALYSIS] AT SER-334 AND SER-814</scope>
    <scope>IDENTIFICATION BY MASS SPECTROMETRY [LARGE SCALE ANALYSIS]</scope>
    <source>
        <tissue>Cervix carcinoma</tissue>
    </source>
</reference>
<reference key="11">
    <citation type="journal article" date="2011" name="BMC Syst. Biol.">
        <title>Initial characterization of the human central proteome.</title>
        <authorList>
            <person name="Burkard T.R."/>
            <person name="Planyavsky M."/>
            <person name="Kaupe I."/>
            <person name="Breitwieser F.P."/>
            <person name="Buerckstuemmer T."/>
            <person name="Bennett K.L."/>
            <person name="Superti-Furga G."/>
            <person name="Colinge J."/>
        </authorList>
    </citation>
    <scope>IDENTIFICATION BY MASS SPECTROMETRY [LARGE SCALE ANALYSIS]</scope>
</reference>
<reference key="12">
    <citation type="journal article" date="2011" name="Sci. Signal.">
        <title>System-wide temporal characterization of the proteome and phosphoproteome of human embryonic stem cell differentiation.</title>
        <authorList>
            <person name="Rigbolt K.T."/>
            <person name="Prokhorova T.A."/>
            <person name="Akimov V."/>
            <person name="Henningsen J."/>
            <person name="Johansen P.T."/>
            <person name="Kratchmarova I."/>
            <person name="Kassem M."/>
            <person name="Mann M."/>
            <person name="Olsen J.V."/>
            <person name="Blagoev B."/>
        </authorList>
    </citation>
    <scope>PHOSPHORYLATION [LARGE SCALE ANALYSIS] AT SER-334</scope>
    <scope>IDENTIFICATION BY MASS SPECTROMETRY [LARGE SCALE ANALYSIS]</scope>
</reference>
<reference key="13">
    <citation type="journal article" date="2012" name="Proc. Natl. Acad. Sci. U.S.A.">
        <title>Nezha/CAMSAP3 and CAMSAP2 cooperate in epithelial-specific organization of noncentrosomal microtubules.</title>
        <authorList>
            <person name="Tanaka N."/>
            <person name="Meng W."/>
            <person name="Nagae S."/>
            <person name="Takeichi M."/>
        </authorList>
    </citation>
    <scope>FUNCTION</scope>
    <scope>SUBCELLULAR LOCATION</scope>
</reference>
<reference key="14">
    <citation type="journal article" date="2013" name="J. Proteome Res.">
        <title>Toward a comprehensive characterization of a human cancer cell phosphoproteome.</title>
        <authorList>
            <person name="Zhou H."/>
            <person name="Di Palma S."/>
            <person name="Preisinger C."/>
            <person name="Peng M."/>
            <person name="Polat A.N."/>
            <person name="Heck A.J."/>
            <person name="Mohammed S."/>
        </authorList>
    </citation>
    <scope>PHOSPHORYLATION [LARGE SCALE ANALYSIS] AT SER-334; SER-341; SER-351; SER-368; SER-373; SER-382; SER-769; SER-814 AND SER-1074</scope>
    <scope>IDENTIFICATION BY MASS SPECTROMETRY [LARGE SCALE ANALYSIS]</scope>
    <source>
        <tissue>Cervix carcinoma</tissue>
        <tissue>Erythroleukemia</tissue>
    </source>
</reference>
<reference key="15">
    <citation type="journal article" date="2014" name="Dev. Cell">
        <title>Microtubule minus-end stabilization by polymerization-driven CAMSAP deposition.</title>
        <authorList>
            <person name="Jiang K."/>
            <person name="Hua S."/>
            <person name="Mohan R."/>
            <person name="Grigoriev I."/>
            <person name="Yau K.W."/>
            <person name="Liu Q."/>
            <person name="Katrukha E.A."/>
            <person name="Altelaar A.F."/>
            <person name="Heck A.J."/>
            <person name="Hoogenraad C.C."/>
            <person name="Akhmanova A."/>
        </authorList>
    </citation>
    <scope>FUNCTION</scope>
    <scope>SUBCELLULAR LOCATION</scope>
    <scope>DOMAIN</scope>
    <scope>INTERACTION WITH KATNA1 AND KATNB1</scope>
</reference>
<reference key="16">
    <citation type="journal article" date="2014" name="J. Proteomics">
        <title>An enzyme assisted RP-RPLC approach for in-depth analysis of human liver phosphoproteome.</title>
        <authorList>
            <person name="Bian Y."/>
            <person name="Song C."/>
            <person name="Cheng K."/>
            <person name="Dong M."/>
            <person name="Wang F."/>
            <person name="Huang J."/>
            <person name="Sun D."/>
            <person name="Wang L."/>
            <person name="Ye M."/>
            <person name="Zou H."/>
        </authorList>
    </citation>
    <scope>PHOSPHORYLATION [LARGE SCALE ANALYSIS] AT SER-193; SER-334; SER-547 AND THR-799</scope>
    <scope>IDENTIFICATION BY MASS SPECTROMETRY [LARGE SCALE ANALYSIS]</scope>
    <source>
        <tissue>Liver</tissue>
    </source>
</reference>
<reference key="17">
    <citation type="journal article" date="2016" name="Dev. Cell">
        <title>The CAMSAP3-ACF7 complex couples noncentrosomal microtubules with actin filaments to coordinate their dynamics.</title>
        <authorList>
            <person name="Ning W."/>
            <person name="Yu Y."/>
            <person name="Xu H."/>
            <person name="Liu X."/>
            <person name="Wang D."/>
            <person name="Wang J."/>
            <person name="Wang Y."/>
            <person name="Meng W."/>
        </authorList>
    </citation>
    <scope>FUNCTION</scope>
    <scope>SUBCELLULAR LOCATION</scope>
    <scope>INTERACTION WITH MACF1</scope>
</reference>
<reference key="18">
    <citation type="journal article" date="2016" name="J. Cell Sci.">
        <title>Control of apico-basal epithelial polarity by the microtubule minus-end-binding protein CAMSAP3 and spectraplakin ACF7.</title>
        <authorList>
            <person name="Noordstra I."/>
            <person name="Liu Q."/>
            <person name="Nijenhuis W."/>
            <person name="Hua S."/>
            <person name="Jiang K."/>
            <person name="Baars M."/>
            <person name="Remmelzwaal S."/>
            <person name="Martin M."/>
            <person name="Kapitein L.C."/>
            <person name="Akhmanova A."/>
        </authorList>
    </citation>
    <scope>FUNCTION</scope>
    <scope>INTERACTION WITH MACF1</scope>
</reference>
<reference key="19">
    <citation type="journal article" date="2016" name="Proc. Natl. Acad. Sci. U.S.A.">
        <title>CAMSAP3 orients the apical-to-basal polarity of microtubule arrays in epithelial cells.</title>
        <authorList>
            <person name="Toya M."/>
            <person name="Kobayashi S."/>
            <person name="Kawasaki M."/>
            <person name="Shioi G."/>
            <person name="Kaneko M."/>
            <person name="Ishiuchi T."/>
            <person name="Misaki K."/>
            <person name="Meng W."/>
            <person name="Takeichi M."/>
        </authorList>
    </citation>
    <scope>FUNCTION</scope>
</reference>
<reference key="20">
    <citation type="journal article" date="2017" name="J. Cell Sci.">
        <title>CAMSAP3 accumulates in the pericentrosomal area and accompanies microtubule release from the centrosome via katanin.</title>
        <authorList>
            <person name="Dong C."/>
            <person name="Xu H."/>
            <person name="Zhang R."/>
            <person name="Tanaka N."/>
            <person name="Takeichi M."/>
            <person name="Meng W."/>
        </authorList>
    </citation>
    <scope>FUNCTION</scope>
    <scope>SUBCELLULAR LOCATION</scope>
    <scope>INTERACTION WITH KATNA1</scope>
</reference>
<reference key="21">
    <citation type="journal article" date="2017" name="J. Genet. Genomics">
        <title>CAMSAP3-dependent microtubule dynamics regulates Golgi assembly in epithelial cells.</title>
        <authorList>
            <person name="Wang J."/>
            <person name="Xu H."/>
            <person name="Jiang Y."/>
            <person name="Takahashi M."/>
            <person name="Takeichi M."/>
            <person name="Meng W."/>
        </authorList>
    </citation>
    <scope>FUNCTION</scope>
    <scope>INTERACTION WITH AKAP9</scope>
</reference>
<sequence>MVEAAPPGPGPLRRTFLVPEIKSLDQYDFSRAKAAASLAWVLRAAFGGAEHVPPELWEPFYTDQYAQEHVKPPVTRLLLSAELYCRAWRQALPQLETPPNPSALLALLARRGTVPALPERPVREADLRHQPILMGAHLAVIDALMAAFAFEWTKTLPGPLALTSLEHKLLFWVDTTVRRLQEKTEQEAAQRASPAAPADGAAPAQPSIRYRKDRVVARRAPCFPTVTSLQDLASGAALAATIHCYCPQLLRLEEVCLKDPMSVADSLYNLQLVQDFCASRLPRGCPLSLEDLLYVPPPLKVNLVVMLAELFMCFEVLKPDFVQVKDLPDGHAASPRGTEASPPQNNSGSSSPVFTFRHPLLSSGGPQSPLRGSTGSLKSSPSMSHMEALGKAWNRQLSRPLSQAVSFSTPFGLDSDVDVVMGDPVLLRSVSSDSLGPPRPAPARTPTQPPPEPGDLPTIEEALQIIHSAEPRLLPDGAADGSFYLHSPEGPSKPSLASPYLPEGTSKPLSDRPTKAPVYMPHPETPSKPSPCLVGEASKPPAPSEGSPKAVASSPAATNSEVKMTSFAERKKQLVKAEAEAGAGSPTSTPAPPEALSSEMSELSARLEEKRRAIEAQKRRIEAIFAKHRQRLGKSAFLQVQPREASGEAEAEAEEADSGPVPGGERPAGEGQGEPTSRPKAVTFSPDLGPVPHEGLGEYNRAVSKLSAALSSLQRDMQRLTDQQQRLLAPPEAPGSAPPPAAWVIPGPTTGPKAASPSPARRVPATRRSPGPGPSQSPRSPKHTRPAELRLAPLTRVLTPPHDVDSLPHLRKFSPSQVPVQTRSSILLAEETPPEEPAARPGLIEIPLGSLADPAAEDEGDGSPAGAEDSLEEEASSEGEPRVGLGFFYKDEDKPEDEMAQKRASLLERQQRRAEEARRRKQWQEVEKEQRREEAARLAQEEAPGPAPLVSAVPMATPAPAARAPAEEEVGPRKGDFTRQEYERRAQLKLMDDLDKVLRPRAAGSGGPGRGGRRATRPRSGCCDDSALARSPARGLLGSRLSKIYSQSTLSLSTVANEAHNNLGVKRPTSRAPSPSGLMSPSRLPGSRERDWENGSNASSPASVPEYTGPRLYKEPSAKSNKFIIHNALSHCCLAGKVNEPQKNRILEEIEKSKANHFLILFRDSSCQFRALYTLSGETEELSRLAGYGPRTVTPAMVEGIYKYNSDRKRFTQIPAKTMSMSVDAFTIQGHLWQGKKPTTPKKGGGTPK</sequence>